<dbReference type="EMBL" id="CP000909">
    <property type="protein sequence ID" value="ABY33265.1"/>
    <property type="molecule type" value="Genomic_DNA"/>
</dbReference>
<dbReference type="RefSeq" id="WP_012255921.1">
    <property type="nucleotide sequence ID" value="NC_010175.1"/>
</dbReference>
<dbReference type="RefSeq" id="YP_001633654.1">
    <property type="nucleotide sequence ID" value="NC_010175.1"/>
</dbReference>
<dbReference type="SMR" id="A9WAN7"/>
<dbReference type="STRING" id="324602.Caur_0007"/>
<dbReference type="EnsemblBacteria" id="ABY33265">
    <property type="protein sequence ID" value="ABY33265"/>
    <property type="gene ID" value="Caur_0007"/>
</dbReference>
<dbReference type="KEGG" id="cau:Caur_0007"/>
<dbReference type="PATRIC" id="fig|324602.8.peg.7"/>
<dbReference type="eggNOG" id="COG0851">
    <property type="taxonomic scope" value="Bacteria"/>
</dbReference>
<dbReference type="HOGENOM" id="CLU_137929_1_1_0"/>
<dbReference type="InParanoid" id="A9WAN7"/>
<dbReference type="Proteomes" id="UP000002008">
    <property type="component" value="Chromosome"/>
</dbReference>
<dbReference type="GO" id="GO:0005886">
    <property type="term" value="C:plasma membrane"/>
    <property type="evidence" value="ECO:0000318"/>
    <property type="project" value="GO_Central"/>
</dbReference>
<dbReference type="GO" id="GO:0000918">
    <property type="term" value="P:division septum site selection"/>
    <property type="evidence" value="ECO:0000318"/>
    <property type="project" value="GO_Central"/>
</dbReference>
<dbReference type="GO" id="GO:0032955">
    <property type="term" value="P:regulation of division septum assembly"/>
    <property type="evidence" value="ECO:0007669"/>
    <property type="project" value="InterPro"/>
</dbReference>
<dbReference type="Gene3D" id="3.30.1070.10">
    <property type="entry name" value="Cell division topological specificity factor MinE"/>
    <property type="match status" value="1"/>
</dbReference>
<dbReference type="HAMAP" id="MF_00262">
    <property type="entry name" value="MinE"/>
    <property type="match status" value="1"/>
</dbReference>
<dbReference type="InterPro" id="IPR005527">
    <property type="entry name" value="MinE"/>
</dbReference>
<dbReference type="InterPro" id="IPR036707">
    <property type="entry name" value="MinE_sf"/>
</dbReference>
<dbReference type="NCBIfam" id="TIGR01215">
    <property type="entry name" value="minE"/>
    <property type="match status" value="1"/>
</dbReference>
<dbReference type="Pfam" id="PF03776">
    <property type="entry name" value="MinE"/>
    <property type="match status" value="1"/>
</dbReference>
<dbReference type="SUPFAM" id="SSF55229">
    <property type="entry name" value="Cell division protein MinE topological specificity domain"/>
    <property type="match status" value="1"/>
</dbReference>
<feature type="chain" id="PRO_1000078632" description="Cell division topological specificity factor">
    <location>
        <begin position="1"/>
        <end position="91"/>
    </location>
</feature>
<gene>
    <name evidence="1" type="primary">minE</name>
    <name type="ordered locus">Caur_0007</name>
</gene>
<accession>A9WAN7</accession>
<comment type="function">
    <text evidence="1">Prevents the cell division inhibition by proteins MinC and MinD at internal division sites while permitting inhibition at polar sites. This ensures cell division at the proper site by restricting the formation of a division septum at the midpoint of the long axis of the cell.</text>
</comment>
<comment type="similarity">
    <text evidence="1">Belongs to the MinE family.</text>
</comment>
<evidence type="ECO:0000255" key="1">
    <source>
        <dbReference type="HAMAP-Rule" id="MF_00262"/>
    </source>
</evidence>
<reference key="1">
    <citation type="journal article" date="2011" name="BMC Genomics">
        <title>Complete genome sequence of the filamentous anoxygenic phototrophic bacterium Chloroflexus aurantiacus.</title>
        <authorList>
            <person name="Tang K.H."/>
            <person name="Barry K."/>
            <person name="Chertkov O."/>
            <person name="Dalin E."/>
            <person name="Han C.S."/>
            <person name="Hauser L.J."/>
            <person name="Honchak B.M."/>
            <person name="Karbach L.E."/>
            <person name="Land M.L."/>
            <person name="Lapidus A."/>
            <person name="Larimer F.W."/>
            <person name="Mikhailova N."/>
            <person name="Pitluck S."/>
            <person name="Pierson B.K."/>
            <person name="Blankenship R.E."/>
        </authorList>
    </citation>
    <scope>NUCLEOTIDE SEQUENCE [LARGE SCALE GENOMIC DNA]</scope>
    <source>
        <strain>ATCC 29366 / DSM 635 / J-10-fl</strain>
    </source>
</reference>
<protein>
    <recommendedName>
        <fullName evidence="1">Cell division topological specificity factor</fullName>
    </recommendedName>
</protein>
<proteinExistence type="inferred from homology"/>
<name>MINE_CHLAA</name>
<sequence length="91" mass="10361">MSFLNGLFGRKRDSSAELAKQRLLTVLIDDRYKLTPEMMAQMKADLAEVLKRYLPAIDAEQIEVTLSRGEAHDLLKADVPLRRATDHPPNR</sequence>
<organism>
    <name type="scientific">Chloroflexus aurantiacus (strain ATCC 29366 / DSM 635 / J-10-fl)</name>
    <dbReference type="NCBI Taxonomy" id="324602"/>
    <lineage>
        <taxon>Bacteria</taxon>
        <taxon>Bacillati</taxon>
        <taxon>Chloroflexota</taxon>
        <taxon>Chloroflexia</taxon>
        <taxon>Chloroflexales</taxon>
        <taxon>Chloroflexineae</taxon>
        <taxon>Chloroflexaceae</taxon>
        <taxon>Chloroflexus</taxon>
    </lineage>
</organism>
<keyword id="KW-0131">Cell cycle</keyword>
<keyword id="KW-0132">Cell division</keyword>
<keyword id="KW-1185">Reference proteome</keyword>